<name>CULP7_MYCTU</name>
<protein>
    <recommendedName>
        <fullName evidence="7">Probable carboxylesterase Culp7</fullName>
        <ecNumber evidence="3">3.1.1.-</ecNumber>
    </recommendedName>
    <alternativeName>
        <fullName evidence="6">Cutinase-like protein 7</fullName>
        <shortName evidence="6">Culp7</shortName>
    </alternativeName>
</protein>
<sequence length="187" mass="18787">MAPGSHLVLAASEDCSSTHCVSQVGAKSLGVYAVNYPASNDFASSDFPKTVIDGIRDAGSHIQSMAMSCPQTRQVLGGYSQGAAVAGYVTSAVVPPAVPVQAVPAPMAPEVANHVAAVTLFGAPSAQFLGQYGAPPIAIGPLYQPKTLQLCADGDSICGDGNSPVAHGLYAVNGMVGQGANFAASRL</sequence>
<reference key="1">
    <citation type="journal article" date="1998" name="Nature">
        <title>Deciphering the biology of Mycobacterium tuberculosis from the complete genome sequence.</title>
        <authorList>
            <person name="Cole S.T."/>
            <person name="Brosch R."/>
            <person name="Parkhill J."/>
            <person name="Garnier T."/>
            <person name="Churcher C.M."/>
            <person name="Harris D.E."/>
            <person name="Gordon S.V."/>
            <person name="Eiglmeier K."/>
            <person name="Gas S."/>
            <person name="Barry C.E. III"/>
            <person name="Tekaia F."/>
            <person name="Badcock K."/>
            <person name="Basham D."/>
            <person name="Brown D."/>
            <person name="Chillingworth T."/>
            <person name="Connor R."/>
            <person name="Davies R.M."/>
            <person name="Devlin K."/>
            <person name="Feltwell T."/>
            <person name="Gentles S."/>
            <person name="Hamlin N."/>
            <person name="Holroyd S."/>
            <person name="Hornsby T."/>
            <person name="Jagels K."/>
            <person name="Krogh A."/>
            <person name="McLean J."/>
            <person name="Moule S."/>
            <person name="Murphy L.D."/>
            <person name="Oliver S."/>
            <person name="Osborne J."/>
            <person name="Quail M.A."/>
            <person name="Rajandream M.A."/>
            <person name="Rogers J."/>
            <person name="Rutter S."/>
            <person name="Seeger K."/>
            <person name="Skelton S."/>
            <person name="Squares S."/>
            <person name="Squares R."/>
            <person name="Sulston J.E."/>
            <person name="Taylor K."/>
            <person name="Whitehead S."/>
            <person name="Barrell B.G."/>
        </authorList>
    </citation>
    <scope>NUCLEOTIDE SEQUENCE [LARGE SCALE GENOMIC DNA]</scope>
    <source>
        <strain>ATCC 25618 / H37Rv</strain>
    </source>
</reference>
<reference key="2">
    <citation type="journal article" date="2009" name="FASEB J.">
        <title>Cutinase-like proteins of Mycobacterium tuberculosis: characterization of their variable enzymatic functions and active site identification.</title>
        <authorList>
            <person name="West N.P."/>
            <person name="Chow F.M."/>
            <person name="Randall E.J."/>
            <person name="Wu J."/>
            <person name="Chen J."/>
            <person name="Ribeiro J.M."/>
            <person name="Britton W.J."/>
        </authorList>
    </citation>
    <scope>SHOWS THAT IT DOES NOT HAVE CUTINASE ACTIVITY</scope>
    <source>
        <strain>H37Rv</strain>
    </source>
</reference>
<reference key="3">
    <citation type="journal article" date="2015" name="PLoS ONE">
        <title>Heterogeneity among homologs of cutinase-like protein Cut5 in Mycobacteria.</title>
        <authorList>
            <person name="Verma D."/>
            <person name="Das L."/>
            <person name="Gambhir V."/>
            <person name="Dikshit K.L."/>
            <person name="Varshney G.C."/>
        </authorList>
    </citation>
    <scope>EXPRESSION</scope>
    <scope>FUNCTION</scope>
    <scope>SUBCELLULAR LOCATION</scope>
    <scope>DEVELOPMENTAL STAGE</scope>
    <source>
        <strain>H37Rv</strain>
    </source>
</reference>
<organism>
    <name type="scientific">Mycobacterium tuberculosis (strain ATCC 25618 / H37Rv)</name>
    <dbReference type="NCBI Taxonomy" id="83332"/>
    <lineage>
        <taxon>Bacteria</taxon>
        <taxon>Bacillati</taxon>
        <taxon>Actinomycetota</taxon>
        <taxon>Actinomycetes</taxon>
        <taxon>Mycobacteriales</taxon>
        <taxon>Mycobacteriaceae</taxon>
        <taxon>Mycobacterium</taxon>
        <taxon>Mycobacterium tuberculosis complex</taxon>
    </lineage>
</organism>
<proteinExistence type="evidence at transcript level"/>
<accession>Q79FA4</accession>
<accession>I6X868</accession>
<accession>L0TGB9</accession>
<feature type="chain" id="PRO_0000450112" description="Probable carboxylesterase Culp7">
    <location>
        <begin position="1"/>
        <end position="187"/>
    </location>
</feature>
<feature type="active site" description="Nucleophile" evidence="1">
    <location>
        <position position="80"/>
    </location>
</feature>
<feature type="active site" evidence="1">
    <location>
        <position position="155"/>
    </location>
</feature>
<feature type="active site" description="Proton donor/acceptor" evidence="1">
    <location>
        <position position="167"/>
    </location>
</feature>
<feature type="site" description="Transition state stabilizer" evidence="2">
    <location>
        <position position="81"/>
    </location>
</feature>
<feature type="disulfide bond" evidence="1">
    <location>
        <begin position="15"/>
        <end position="69"/>
    </location>
</feature>
<feature type="disulfide bond" evidence="1">
    <location>
        <begin position="151"/>
        <end position="158"/>
    </location>
</feature>
<gene>
    <name evidence="8" type="primary">cut5b</name>
    <name evidence="8" type="ordered locus">Rv3724B</name>
</gene>
<dbReference type="EC" id="3.1.1.-" evidence="3"/>
<dbReference type="EMBL" id="AL123456">
    <property type="protein sequence ID" value="CCP46551.1"/>
    <property type="molecule type" value="Genomic_DNA"/>
</dbReference>
<dbReference type="SMR" id="Q79FA4"/>
<dbReference type="STRING" id="83332.Rv3724B"/>
<dbReference type="ESTHER" id="myctu-RV3724">
    <property type="family name" value="Cutinase"/>
</dbReference>
<dbReference type="PaxDb" id="83332-Rv3724B"/>
<dbReference type="KEGG" id="mtv:RVBD_3724B"/>
<dbReference type="PATRIC" id="fig|83332.111.peg.4141"/>
<dbReference type="TubercuList" id="Rv3724B"/>
<dbReference type="eggNOG" id="ENOG5030PZC">
    <property type="taxonomic scope" value="Bacteria"/>
</dbReference>
<dbReference type="InParanoid" id="Q79FA4"/>
<dbReference type="PhylomeDB" id="Q79FA4"/>
<dbReference type="Proteomes" id="UP000001584">
    <property type="component" value="Chromosome"/>
</dbReference>
<dbReference type="GO" id="GO:0005737">
    <property type="term" value="C:cytoplasm"/>
    <property type="evidence" value="ECO:0007669"/>
    <property type="project" value="UniProtKB-SubCell"/>
</dbReference>
<dbReference type="GO" id="GO:0005576">
    <property type="term" value="C:extracellular region"/>
    <property type="evidence" value="ECO:0007669"/>
    <property type="project" value="UniProtKB-KW"/>
</dbReference>
<dbReference type="GO" id="GO:0005886">
    <property type="term" value="C:plasma membrane"/>
    <property type="evidence" value="ECO:0007669"/>
    <property type="project" value="UniProtKB-SubCell"/>
</dbReference>
<dbReference type="GO" id="GO:0106435">
    <property type="term" value="F:carboxylesterase activity"/>
    <property type="evidence" value="ECO:0000318"/>
    <property type="project" value="GO_Central"/>
</dbReference>
<dbReference type="GO" id="GO:0016298">
    <property type="term" value="F:lipase activity"/>
    <property type="evidence" value="ECO:0000318"/>
    <property type="project" value="GO_Central"/>
</dbReference>
<dbReference type="GO" id="GO:0016042">
    <property type="term" value="P:lipid catabolic process"/>
    <property type="evidence" value="ECO:0000318"/>
    <property type="project" value="GO_Central"/>
</dbReference>
<dbReference type="Gene3D" id="3.40.50.1820">
    <property type="entry name" value="alpha/beta hydrolase"/>
    <property type="match status" value="1"/>
</dbReference>
<dbReference type="InterPro" id="IPR029058">
    <property type="entry name" value="AB_hydrolase_fold"/>
</dbReference>
<dbReference type="InterPro" id="IPR000675">
    <property type="entry name" value="Cutinase/axe"/>
</dbReference>
<dbReference type="PANTHER" id="PTHR33630:SF9">
    <property type="entry name" value="CUTINASE 4"/>
    <property type="match status" value="1"/>
</dbReference>
<dbReference type="PANTHER" id="PTHR33630">
    <property type="entry name" value="CUTINASE RV1984C-RELATED-RELATED"/>
    <property type="match status" value="1"/>
</dbReference>
<dbReference type="Pfam" id="PF01083">
    <property type="entry name" value="Cutinase"/>
    <property type="match status" value="1"/>
</dbReference>
<dbReference type="SMART" id="SM01110">
    <property type="entry name" value="Cutinase"/>
    <property type="match status" value="1"/>
</dbReference>
<dbReference type="SUPFAM" id="SSF53474">
    <property type="entry name" value="alpha/beta-Hydrolases"/>
    <property type="match status" value="1"/>
</dbReference>
<comment type="function">
    <text evidence="4 5">May have a role in cell wall processes (PubMed:26177502). Does not exhibit cutinase activity (PubMed:19225166).</text>
</comment>
<comment type="subcellular location">
    <subcellularLocation>
        <location evidence="5">Cytoplasm</location>
    </subcellularLocation>
    <subcellularLocation>
        <location evidence="5">Cell membrane</location>
    </subcellularLocation>
    <subcellularLocation>
        <location evidence="5">Secreted</location>
        <location evidence="5">Cell wall</location>
    </subcellularLocation>
</comment>
<comment type="developmental stage">
    <text evidence="5">Expressed at late exponential and stationary phases, but not in the early exponential phase.</text>
</comment>
<comment type="miscellaneous">
    <text evidence="5">A single nucleotide (T) insertion is observed in the Rv3724/cut5 gene. Cut5 is expressed as Rv3724a/cut5a and Rv3724b/cut5b in H37Rv strain.</text>
</comment>
<comment type="similarity">
    <text evidence="7">Belongs to the cutinase family.</text>
</comment>
<keyword id="KW-1003">Cell membrane</keyword>
<keyword id="KW-0134">Cell wall</keyword>
<keyword id="KW-0963">Cytoplasm</keyword>
<keyword id="KW-1015">Disulfide bond</keyword>
<keyword id="KW-0378">Hydrolase</keyword>
<keyword id="KW-0472">Membrane</keyword>
<keyword id="KW-1185">Reference proteome</keyword>
<keyword id="KW-0964">Secreted</keyword>
<keyword id="KW-0719">Serine esterase</keyword>
<evidence type="ECO:0000250" key="1">
    <source>
        <dbReference type="UniProtKB" id="O53581"/>
    </source>
</evidence>
<evidence type="ECO:0000250" key="2">
    <source>
        <dbReference type="UniProtKB" id="P00590"/>
    </source>
</evidence>
<evidence type="ECO:0000250" key="3">
    <source>
        <dbReference type="UniProtKB" id="P9WP43"/>
    </source>
</evidence>
<evidence type="ECO:0000269" key="4">
    <source>
    </source>
</evidence>
<evidence type="ECO:0000269" key="5">
    <source>
    </source>
</evidence>
<evidence type="ECO:0000303" key="6">
    <source>
    </source>
</evidence>
<evidence type="ECO:0000305" key="7"/>
<evidence type="ECO:0000312" key="8">
    <source>
        <dbReference type="EMBL" id="CCP46551.1"/>
    </source>
</evidence>